<comment type="function">
    <text evidence="1">Involved in the biosynthesis of the osmoprotectant glycine betaine. Catalyzes the oxidation of choline to betaine aldehyde and betaine aldehyde to glycine betaine at the same rate.</text>
</comment>
<comment type="catalytic activity">
    <reaction evidence="1">
        <text>choline + A = betaine aldehyde + AH2</text>
        <dbReference type="Rhea" id="RHEA:17433"/>
        <dbReference type="ChEBI" id="CHEBI:13193"/>
        <dbReference type="ChEBI" id="CHEBI:15354"/>
        <dbReference type="ChEBI" id="CHEBI:15710"/>
        <dbReference type="ChEBI" id="CHEBI:17499"/>
        <dbReference type="EC" id="1.1.99.1"/>
    </reaction>
</comment>
<comment type="catalytic activity">
    <reaction evidence="1">
        <text>betaine aldehyde + NAD(+) + H2O = glycine betaine + NADH + 2 H(+)</text>
        <dbReference type="Rhea" id="RHEA:15305"/>
        <dbReference type="ChEBI" id="CHEBI:15377"/>
        <dbReference type="ChEBI" id="CHEBI:15378"/>
        <dbReference type="ChEBI" id="CHEBI:15710"/>
        <dbReference type="ChEBI" id="CHEBI:17750"/>
        <dbReference type="ChEBI" id="CHEBI:57540"/>
        <dbReference type="ChEBI" id="CHEBI:57945"/>
        <dbReference type="EC" id="1.2.1.8"/>
    </reaction>
</comment>
<comment type="cofactor">
    <cofactor evidence="1">
        <name>FAD</name>
        <dbReference type="ChEBI" id="CHEBI:57692"/>
    </cofactor>
</comment>
<comment type="pathway">
    <text evidence="1">Amine and polyamine biosynthesis; betaine biosynthesis via choline pathway; betaine aldehyde from choline (cytochrome c reductase route): step 1/1.</text>
</comment>
<comment type="similarity">
    <text evidence="1">Belongs to the GMC oxidoreductase family.</text>
</comment>
<keyword id="KW-0274">FAD</keyword>
<keyword id="KW-0285">Flavoprotein</keyword>
<keyword id="KW-0520">NAD</keyword>
<keyword id="KW-0560">Oxidoreductase</keyword>
<reference key="1">
    <citation type="submission" date="2007-08" db="EMBL/GenBank/DDBJ databases">
        <authorList>
            <consortium name="The Vibrio harveyi Genome Sequencing Project"/>
            <person name="Bassler B."/>
            <person name="Clifton S.W."/>
            <person name="Fulton L."/>
            <person name="Delehaunty K."/>
            <person name="Fronick C."/>
            <person name="Harrison M."/>
            <person name="Markivic C."/>
            <person name="Fulton R."/>
            <person name="Tin-Wollam A.-M."/>
            <person name="Shah N."/>
            <person name="Pepin K."/>
            <person name="Nash W."/>
            <person name="Thiruvilangam P."/>
            <person name="Bhonagiri V."/>
            <person name="Waters C."/>
            <person name="Tu K.C."/>
            <person name="Irgon J."/>
            <person name="Wilson R.K."/>
        </authorList>
    </citation>
    <scope>NUCLEOTIDE SEQUENCE [LARGE SCALE GENOMIC DNA]</scope>
    <source>
        <strain>ATCC BAA-1116 / BB120</strain>
    </source>
</reference>
<evidence type="ECO:0000255" key="1">
    <source>
        <dbReference type="HAMAP-Rule" id="MF_00750"/>
    </source>
</evidence>
<accession>A7N2P9</accession>
<name>BETA_VIBC1</name>
<sequence>MQQHYDYIIVGAGSAGCVLADRLSESGQHQVLLLEAGGSDKSIFIQMPTALSYPMNTEKYAWQFETVAEEGLDGRQLHCPRGKVLGGSSSINGMVYVRGHACDFDEWEAEGAKGWNYQACLPYFRKAETWTGGADEYRGGSGPVGTCNGNDMKLNPLYQAFIEAGKDAGYPETQDYNGYQQEGFGPMHMTVDKGVRASTSNAYLSRAKKRSNFTLMKGVTAHRILLEGKKAVGIEFEQSGEIKQCFANKEVVSSAGSIGSVQLLQLSGIGPKTVLDKAGIEVKHTLEGVGKNLQDHLEVYFQYHCKQPITLNSKLGLISKGLIGTEWILTRKGLGATNHFESCAFIRSREGLKSPNIQFHFLPAAMRYDGRAAFDGHGFQVHVGPNKPESRGSVEVVSANPNDKPKIEFNYISTEQDKQDWRDCIRLTREILNQPAMDAFRGEEIQPGLNITSDEAIGEWVKQNVESAYHPSCSCKMGSNDDPMAVLNEACQVRGIEGLRVVDSSIFPTIPNGNLNAPTIMVAERAADMILGNTLEQSNNTPVWIAPNWQETQRMRPPKRDLSSISSIA</sequence>
<feature type="chain" id="PRO_1000046574" description="Oxygen-dependent choline dehydrogenase">
    <location>
        <begin position="1"/>
        <end position="569"/>
    </location>
</feature>
<feature type="active site" description="Proton acceptor" evidence="1">
    <location>
        <position position="470"/>
    </location>
</feature>
<feature type="binding site" evidence="1">
    <location>
        <begin position="6"/>
        <end position="35"/>
    </location>
    <ligand>
        <name>FAD</name>
        <dbReference type="ChEBI" id="CHEBI:57692"/>
    </ligand>
</feature>
<organism>
    <name type="scientific">Vibrio campbellii (strain ATCC BAA-1116)</name>
    <dbReference type="NCBI Taxonomy" id="2902295"/>
    <lineage>
        <taxon>Bacteria</taxon>
        <taxon>Pseudomonadati</taxon>
        <taxon>Pseudomonadota</taxon>
        <taxon>Gammaproteobacteria</taxon>
        <taxon>Vibrionales</taxon>
        <taxon>Vibrionaceae</taxon>
        <taxon>Vibrio</taxon>
    </lineage>
</organism>
<dbReference type="EC" id="1.1.99.1" evidence="1"/>
<dbReference type="EC" id="1.2.1.8" evidence="1"/>
<dbReference type="EMBL" id="CP000790">
    <property type="protein sequence ID" value="ABU74071.1"/>
    <property type="molecule type" value="Genomic_DNA"/>
</dbReference>
<dbReference type="RefSeq" id="WP_012129668.1">
    <property type="nucleotide sequence ID" value="NC_022270.1"/>
</dbReference>
<dbReference type="SMR" id="A7N2P9"/>
<dbReference type="CAZy" id="AA3">
    <property type="family name" value="Auxiliary Activities 3"/>
</dbReference>
<dbReference type="KEGG" id="vha:VIBHAR_06179"/>
<dbReference type="PATRIC" id="fig|338187.25.peg.4151"/>
<dbReference type="UniPathway" id="UPA00529">
    <property type="reaction ID" value="UER00385"/>
</dbReference>
<dbReference type="Proteomes" id="UP000008152">
    <property type="component" value="Chromosome II"/>
</dbReference>
<dbReference type="GO" id="GO:0008802">
    <property type="term" value="F:betaine-aldehyde dehydrogenase (NAD+) activity"/>
    <property type="evidence" value="ECO:0007669"/>
    <property type="project" value="UniProtKB-EC"/>
</dbReference>
<dbReference type="GO" id="GO:0008812">
    <property type="term" value="F:choline dehydrogenase activity"/>
    <property type="evidence" value="ECO:0007669"/>
    <property type="project" value="UniProtKB-UniRule"/>
</dbReference>
<dbReference type="GO" id="GO:0050660">
    <property type="term" value="F:flavin adenine dinucleotide binding"/>
    <property type="evidence" value="ECO:0007669"/>
    <property type="project" value="InterPro"/>
</dbReference>
<dbReference type="GO" id="GO:0019285">
    <property type="term" value="P:glycine betaine biosynthetic process from choline"/>
    <property type="evidence" value="ECO:0007669"/>
    <property type="project" value="UniProtKB-UniRule"/>
</dbReference>
<dbReference type="Gene3D" id="3.50.50.60">
    <property type="entry name" value="FAD/NAD(P)-binding domain"/>
    <property type="match status" value="1"/>
</dbReference>
<dbReference type="Gene3D" id="3.30.560.10">
    <property type="entry name" value="Glucose Oxidase, domain 3"/>
    <property type="match status" value="1"/>
</dbReference>
<dbReference type="HAMAP" id="MF_00750">
    <property type="entry name" value="Choline_dehydrogen"/>
    <property type="match status" value="1"/>
</dbReference>
<dbReference type="InterPro" id="IPR011533">
    <property type="entry name" value="BetA"/>
</dbReference>
<dbReference type="InterPro" id="IPR036188">
    <property type="entry name" value="FAD/NAD-bd_sf"/>
</dbReference>
<dbReference type="InterPro" id="IPR012132">
    <property type="entry name" value="GMC_OxRdtase"/>
</dbReference>
<dbReference type="InterPro" id="IPR000172">
    <property type="entry name" value="GMC_OxRdtase_N"/>
</dbReference>
<dbReference type="InterPro" id="IPR007867">
    <property type="entry name" value="GMC_OxRtase_C"/>
</dbReference>
<dbReference type="NCBIfam" id="TIGR01810">
    <property type="entry name" value="betA"/>
    <property type="match status" value="1"/>
</dbReference>
<dbReference type="NCBIfam" id="NF002550">
    <property type="entry name" value="PRK02106.1"/>
    <property type="match status" value="1"/>
</dbReference>
<dbReference type="PANTHER" id="PTHR11552:SF147">
    <property type="entry name" value="CHOLINE DEHYDROGENASE, MITOCHONDRIAL"/>
    <property type="match status" value="1"/>
</dbReference>
<dbReference type="PANTHER" id="PTHR11552">
    <property type="entry name" value="GLUCOSE-METHANOL-CHOLINE GMC OXIDOREDUCTASE"/>
    <property type="match status" value="1"/>
</dbReference>
<dbReference type="Pfam" id="PF05199">
    <property type="entry name" value="GMC_oxred_C"/>
    <property type="match status" value="1"/>
</dbReference>
<dbReference type="Pfam" id="PF00732">
    <property type="entry name" value="GMC_oxred_N"/>
    <property type="match status" value="1"/>
</dbReference>
<dbReference type="PIRSF" id="PIRSF000137">
    <property type="entry name" value="Alcohol_oxidase"/>
    <property type="match status" value="1"/>
</dbReference>
<dbReference type="SUPFAM" id="SSF54373">
    <property type="entry name" value="FAD-linked reductases, C-terminal domain"/>
    <property type="match status" value="1"/>
</dbReference>
<dbReference type="SUPFAM" id="SSF51905">
    <property type="entry name" value="FAD/NAD(P)-binding domain"/>
    <property type="match status" value="1"/>
</dbReference>
<dbReference type="PROSITE" id="PS00623">
    <property type="entry name" value="GMC_OXRED_1"/>
    <property type="match status" value="1"/>
</dbReference>
<proteinExistence type="inferred from homology"/>
<gene>
    <name evidence="1" type="primary">betA</name>
    <name type="ordered locus">VIBHAR_06179</name>
</gene>
<protein>
    <recommendedName>
        <fullName evidence="1">Oxygen-dependent choline dehydrogenase</fullName>
        <shortName evidence="1">CDH</shortName>
        <shortName evidence="1">CHD</shortName>
        <ecNumber evidence="1">1.1.99.1</ecNumber>
    </recommendedName>
    <alternativeName>
        <fullName evidence="1">Betaine aldehyde dehydrogenase</fullName>
        <shortName evidence="1">BADH</shortName>
        <ecNumber evidence="1">1.2.1.8</ecNumber>
    </alternativeName>
</protein>